<name>ENO_SPHAL</name>
<sequence length="424" mass="44572">MTAIIDIHGREILDSRGNPTVEVDVLLEDGSFGRAAVPSGASTGAHEAVELRDGDKGRYLGKGVTKAVAAVNGDIAEALVGLDAEDQREIDMAMIDLDGTPNKSRLGANAILGVSLAAAKAAADARGLPLYRYVGGVSARTLPVPMMNIINGGEHADNPIDVQEFMIMPVGAGSIAEAVRWGSEIFHTLKKGLSQKGLATAVGDEGGFAPNLASTRDALDFIAASVDQAGFKLGTDVVLALDCAATEFFRNGKYEISGEGLSLSPEQMAEYLAALVKDYPIKSIEDGMSEDDFAGWKALTDLIGGTCQLVGDDLFVTNPARLEQGIKDGLANSLLVKVNQIGTLSETLDAVDMAHRARYSAVMSHRSGETEDATIADLAVATNCGQIKTGSLARSDRLAKYNQLIRIEEELGDMARYPGAAIFG</sequence>
<reference key="1">
    <citation type="journal article" date="2009" name="Proc. Natl. Acad. Sci. U.S.A.">
        <title>The genomic basis of trophic strategy in marine bacteria.</title>
        <authorList>
            <person name="Lauro F.M."/>
            <person name="McDougald D."/>
            <person name="Thomas T."/>
            <person name="Williams T.J."/>
            <person name="Egan S."/>
            <person name="Rice S."/>
            <person name="DeMaere M.Z."/>
            <person name="Ting L."/>
            <person name="Ertan H."/>
            <person name="Johnson J."/>
            <person name="Ferriera S."/>
            <person name="Lapidus A."/>
            <person name="Anderson I."/>
            <person name="Kyrpides N."/>
            <person name="Munk A.C."/>
            <person name="Detter C."/>
            <person name="Han C.S."/>
            <person name="Brown M.V."/>
            <person name="Robb F.T."/>
            <person name="Kjelleberg S."/>
            <person name="Cavicchioli R."/>
        </authorList>
    </citation>
    <scope>NUCLEOTIDE SEQUENCE [LARGE SCALE GENOMIC DNA]</scope>
    <source>
        <strain>DSM 13593 / LMG 18877 / RB2256</strain>
    </source>
</reference>
<protein>
    <recommendedName>
        <fullName evidence="1">Enolase</fullName>
        <ecNumber evidence="1">4.2.1.11</ecNumber>
    </recommendedName>
    <alternativeName>
        <fullName evidence="1">2-phospho-D-glycerate hydro-lyase</fullName>
    </alternativeName>
    <alternativeName>
        <fullName evidence="1">2-phosphoglycerate dehydratase</fullName>
    </alternativeName>
</protein>
<evidence type="ECO:0000255" key="1">
    <source>
        <dbReference type="HAMAP-Rule" id="MF_00318"/>
    </source>
</evidence>
<comment type="function">
    <text evidence="1">Catalyzes the reversible conversion of 2-phosphoglycerate (2-PG) into phosphoenolpyruvate (PEP). It is essential for the degradation of carbohydrates via glycolysis.</text>
</comment>
<comment type="catalytic activity">
    <reaction evidence="1">
        <text>(2R)-2-phosphoglycerate = phosphoenolpyruvate + H2O</text>
        <dbReference type="Rhea" id="RHEA:10164"/>
        <dbReference type="ChEBI" id="CHEBI:15377"/>
        <dbReference type="ChEBI" id="CHEBI:58289"/>
        <dbReference type="ChEBI" id="CHEBI:58702"/>
        <dbReference type="EC" id="4.2.1.11"/>
    </reaction>
</comment>
<comment type="cofactor">
    <cofactor evidence="1">
        <name>Mg(2+)</name>
        <dbReference type="ChEBI" id="CHEBI:18420"/>
    </cofactor>
    <text evidence="1">Binds a second Mg(2+) ion via substrate during catalysis.</text>
</comment>
<comment type="pathway">
    <text evidence="1">Carbohydrate degradation; glycolysis; pyruvate from D-glyceraldehyde 3-phosphate: step 4/5.</text>
</comment>
<comment type="subcellular location">
    <subcellularLocation>
        <location evidence="1">Cytoplasm</location>
    </subcellularLocation>
    <subcellularLocation>
        <location evidence="1">Secreted</location>
    </subcellularLocation>
    <subcellularLocation>
        <location evidence="1">Cell surface</location>
    </subcellularLocation>
    <text evidence="1">Fractions of enolase are present in both the cytoplasm and on the cell surface.</text>
</comment>
<comment type="similarity">
    <text evidence="1">Belongs to the enolase family.</text>
</comment>
<keyword id="KW-0963">Cytoplasm</keyword>
<keyword id="KW-0324">Glycolysis</keyword>
<keyword id="KW-0456">Lyase</keyword>
<keyword id="KW-0460">Magnesium</keyword>
<keyword id="KW-0479">Metal-binding</keyword>
<keyword id="KW-1185">Reference proteome</keyword>
<keyword id="KW-0964">Secreted</keyword>
<accession>Q1GVS8</accession>
<proteinExistence type="inferred from homology"/>
<organism>
    <name type="scientific">Sphingopyxis alaskensis (strain DSM 13593 / LMG 18877 / RB2256)</name>
    <name type="common">Sphingomonas alaskensis</name>
    <dbReference type="NCBI Taxonomy" id="317655"/>
    <lineage>
        <taxon>Bacteria</taxon>
        <taxon>Pseudomonadati</taxon>
        <taxon>Pseudomonadota</taxon>
        <taxon>Alphaproteobacteria</taxon>
        <taxon>Sphingomonadales</taxon>
        <taxon>Sphingomonadaceae</taxon>
        <taxon>Sphingopyxis</taxon>
    </lineage>
</organism>
<dbReference type="EC" id="4.2.1.11" evidence="1"/>
<dbReference type="EMBL" id="CP000356">
    <property type="protein sequence ID" value="ABF52244.1"/>
    <property type="molecule type" value="Genomic_DNA"/>
</dbReference>
<dbReference type="RefSeq" id="WP_011540835.1">
    <property type="nucleotide sequence ID" value="NC_008048.1"/>
</dbReference>
<dbReference type="SMR" id="Q1GVS8"/>
<dbReference type="STRING" id="317655.Sala_0523"/>
<dbReference type="KEGG" id="sal:Sala_0523"/>
<dbReference type="eggNOG" id="COG0148">
    <property type="taxonomic scope" value="Bacteria"/>
</dbReference>
<dbReference type="HOGENOM" id="CLU_031223_2_1_5"/>
<dbReference type="OrthoDB" id="9804716at2"/>
<dbReference type="UniPathway" id="UPA00109">
    <property type="reaction ID" value="UER00187"/>
</dbReference>
<dbReference type="Proteomes" id="UP000006578">
    <property type="component" value="Chromosome"/>
</dbReference>
<dbReference type="GO" id="GO:0009986">
    <property type="term" value="C:cell surface"/>
    <property type="evidence" value="ECO:0007669"/>
    <property type="project" value="UniProtKB-SubCell"/>
</dbReference>
<dbReference type="GO" id="GO:0005576">
    <property type="term" value="C:extracellular region"/>
    <property type="evidence" value="ECO:0007669"/>
    <property type="project" value="UniProtKB-SubCell"/>
</dbReference>
<dbReference type="GO" id="GO:0000015">
    <property type="term" value="C:phosphopyruvate hydratase complex"/>
    <property type="evidence" value="ECO:0007669"/>
    <property type="project" value="InterPro"/>
</dbReference>
<dbReference type="GO" id="GO:0000287">
    <property type="term" value="F:magnesium ion binding"/>
    <property type="evidence" value="ECO:0007669"/>
    <property type="project" value="UniProtKB-UniRule"/>
</dbReference>
<dbReference type="GO" id="GO:0004634">
    <property type="term" value="F:phosphopyruvate hydratase activity"/>
    <property type="evidence" value="ECO:0007669"/>
    <property type="project" value="UniProtKB-UniRule"/>
</dbReference>
<dbReference type="GO" id="GO:0006096">
    <property type="term" value="P:glycolytic process"/>
    <property type="evidence" value="ECO:0007669"/>
    <property type="project" value="UniProtKB-UniRule"/>
</dbReference>
<dbReference type="CDD" id="cd03313">
    <property type="entry name" value="enolase"/>
    <property type="match status" value="1"/>
</dbReference>
<dbReference type="FunFam" id="3.20.20.120:FF:000001">
    <property type="entry name" value="Enolase"/>
    <property type="match status" value="1"/>
</dbReference>
<dbReference type="FunFam" id="3.30.390.10:FF:000001">
    <property type="entry name" value="Enolase"/>
    <property type="match status" value="1"/>
</dbReference>
<dbReference type="Gene3D" id="3.20.20.120">
    <property type="entry name" value="Enolase-like C-terminal domain"/>
    <property type="match status" value="1"/>
</dbReference>
<dbReference type="Gene3D" id="3.30.390.10">
    <property type="entry name" value="Enolase-like, N-terminal domain"/>
    <property type="match status" value="1"/>
</dbReference>
<dbReference type="HAMAP" id="MF_00318">
    <property type="entry name" value="Enolase"/>
    <property type="match status" value="1"/>
</dbReference>
<dbReference type="InterPro" id="IPR000941">
    <property type="entry name" value="Enolase"/>
</dbReference>
<dbReference type="InterPro" id="IPR036849">
    <property type="entry name" value="Enolase-like_C_sf"/>
</dbReference>
<dbReference type="InterPro" id="IPR029017">
    <property type="entry name" value="Enolase-like_N"/>
</dbReference>
<dbReference type="InterPro" id="IPR020810">
    <property type="entry name" value="Enolase_C"/>
</dbReference>
<dbReference type="InterPro" id="IPR020809">
    <property type="entry name" value="Enolase_CS"/>
</dbReference>
<dbReference type="InterPro" id="IPR020811">
    <property type="entry name" value="Enolase_N"/>
</dbReference>
<dbReference type="NCBIfam" id="TIGR01060">
    <property type="entry name" value="eno"/>
    <property type="match status" value="1"/>
</dbReference>
<dbReference type="PANTHER" id="PTHR11902">
    <property type="entry name" value="ENOLASE"/>
    <property type="match status" value="1"/>
</dbReference>
<dbReference type="PANTHER" id="PTHR11902:SF1">
    <property type="entry name" value="ENOLASE"/>
    <property type="match status" value="1"/>
</dbReference>
<dbReference type="Pfam" id="PF00113">
    <property type="entry name" value="Enolase_C"/>
    <property type="match status" value="1"/>
</dbReference>
<dbReference type="Pfam" id="PF03952">
    <property type="entry name" value="Enolase_N"/>
    <property type="match status" value="1"/>
</dbReference>
<dbReference type="PIRSF" id="PIRSF001400">
    <property type="entry name" value="Enolase"/>
    <property type="match status" value="1"/>
</dbReference>
<dbReference type="PRINTS" id="PR00148">
    <property type="entry name" value="ENOLASE"/>
</dbReference>
<dbReference type="SFLD" id="SFLDS00001">
    <property type="entry name" value="Enolase"/>
    <property type="match status" value="1"/>
</dbReference>
<dbReference type="SFLD" id="SFLDF00002">
    <property type="entry name" value="enolase"/>
    <property type="match status" value="1"/>
</dbReference>
<dbReference type="SMART" id="SM01192">
    <property type="entry name" value="Enolase_C"/>
    <property type="match status" value="1"/>
</dbReference>
<dbReference type="SMART" id="SM01193">
    <property type="entry name" value="Enolase_N"/>
    <property type="match status" value="1"/>
</dbReference>
<dbReference type="SUPFAM" id="SSF51604">
    <property type="entry name" value="Enolase C-terminal domain-like"/>
    <property type="match status" value="1"/>
</dbReference>
<dbReference type="SUPFAM" id="SSF54826">
    <property type="entry name" value="Enolase N-terminal domain-like"/>
    <property type="match status" value="1"/>
</dbReference>
<dbReference type="PROSITE" id="PS00164">
    <property type="entry name" value="ENOLASE"/>
    <property type="match status" value="1"/>
</dbReference>
<feature type="chain" id="PRO_0000267109" description="Enolase">
    <location>
        <begin position="1"/>
        <end position="424"/>
    </location>
</feature>
<feature type="active site" description="Proton donor" evidence="1">
    <location>
        <position position="205"/>
    </location>
</feature>
<feature type="active site" description="Proton acceptor" evidence="1">
    <location>
        <position position="337"/>
    </location>
</feature>
<feature type="binding site" evidence="1">
    <location>
        <position position="163"/>
    </location>
    <ligand>
        <name>(2R)-2-phosphoglycerate</name>
        <dbReference type="ChEBI" id="CHEBI:58289"/>
    </ligand>
</feature>
<feature type="binding site" evidence="1">
    <location>
        <position position="242"/>
    </location>
    <ligand>
        <name>Mg(2+)</name>
        <dbReference type="ChEBI" id="CHEBI:18420"/>
    </ligand>
</feature>
<feature type="binding site" evidence="1">
    <location>
        <position position="285"/>
    </location>
    <ligand>
        <name>Mg(2+)</name>
        <dbReference type="ChEBI" id="CHEBI:18420"/>
    </ligand>
</feature>
<feature type="binding site" evidence="1">
    <location>
        <position position="312"/>
    </location>
    <ligand>
        <name>Mg(2+)</name>
        <dbReference type="ChEBI" id="CHEBI:18420"/>
    </ligand>
</feature>
<feature type="binding site" evidence="1">
    <location>
        <position position="337"/>
    </location>
    <ligand>
        <name>(2R)-2-phosphoglycerate</name>
        <dbReference type="ChEBI" id="CHEBI:58289"/>
    </ligand>
</feature>
<feature type="binding site" evidence="1">
    <location>
        <position position="366"/>
    </location>
    <ligand>
        <name>(2R)-2-phosphoglycerate</name>
        <dbReference type="ChEBI" id="CHEBI:58289"/>
    </ligand>
</feature>
<feature type="binding site" evidence="1">
    <location>
        <position position="367"/>
    </location>
    <ligand>
        <name>(2R)-2-phosphoglycerate</name>
        <dbReference type="ChEBI" id="CHEBI:58289"/>
    </ligand>
</feature>
<feature type="binding site" evidence="1">
    <location>
        <position position="388"/>
    </location>
    <ligand>
        <name>(2R)-2-phosphoglycerate</name>
        <dbReference type="ChEBI" id="CHEBI:58289"/>
    </ligand>
</feature>
<gene>
    <name evidence="1" type="primary">eno</name>
    <name type="ordered locus">Sala_0523</name>
</gene>